<proteinExistence type="evidence at transcript level"/>
<keyword id="KW-0112">Calmodulin-binding</keyword>
<keyword id="KW-1003">Cell membrane</keyword>
<keyword id="KW-0968">Cytoplasmic vesicle</keyword>
<keyword id="KW-0256">Endoplasmic reticulum</keyword>
<keyword id="KW-0967">Endosome</keyword>
<keyword id="KW-0325">Glycoprotein</keyword>
<keyword id="KW-0407">Ion channel</keyword>
<keyword id="KW-0406">Ion transport</keyword>
<keyword id="KW-0472">Membrane</keyword>
<keyword id="KW-0597">Phosphoprotein</keyword>
<keyword id="KW-0630">Potassium</keyword>
<keyword id="KW-0631">Potassium channel</keyword>
<keyword id="KW-0633">Potassium transport</keyword>
<keyword id="KW-1185">Reference proteome</keyword>
<keyword id="KW-0812">Transmembrane</keyword>
<keyword id="KW-1133">Transmembrane helix</keyword>
<keyword id="KW-0813">Transport</keyword>
<keyword id="KW-0832">Ubl conjugation</keyword>
<keyword id="KW-0851">Voltage-gated channel</keyword>
<feature type="chain" id="PRO_0000054025" description="Potassium voltage-gated channel subfamily KQT member 1">
    <location>
        <begin position="1"/>
        <end position="673"/>
    </location>
</feature>
<feature type="topological domain" description="Cytoplasmic" evidence="6">
    <location>
        <begin position="1"/>
        <end position="118"/>
    </location>
</feature>
<feature type="transmembrane region" description="Helical; Name=Segment S1" evidence="1">
    <location>
        <begin position="119"/>
        <end position="140"/>
    </location>
</feature>
<feature type="topological domain" description="Extracellular" evidence="6">
    <location>
        <begin position="141"/>
        <end position="151"/>
    </location>
</feature>
<feature type="transmembrane region" description="Helical; Name=Segment S2" evidence="1">
    <location>
        <begin position="152"/>
        <end position="174"/>
    </location>
</feature>
<feature type="topological domain" description="Cytoplasmic" evidence="6">
    <location>
        <begin position="175"/>
        <end position="190"/>
    </location>
</feature>
<feature type="transmembrane region" description="Helical; Name=Segment S3" evidence="1">
    <location>
        <begin position="191"/>
        <end position="216"/>
    </location>
</feature>
<feature type="topological domain" description="Extracellular" evidence="6">
    <location>
        <begin position="217"/>
        <end position="224"/>
    </location>
</feature>
<feature type="transmembrane region" description="Helical; Voltage-sensor; Name=Segment S4" evidence="1">
    <location>
        <begin position="225"/>
        <end position="240"/>
    </location>
</feature>
<feature type="topological domain" description="Cytoplasmic" evidence="6">
    <location>
        <begin position="241"/>
        <end position="258"/>
    </location>
</feature>
<feature type="transmembrane region" description="Helical; Name=Segment S5" evidence="1">
    <location>
        <begin position="259"/>
        <end position="281"/>
    </location>
</feature>
<feature type="topological domain" description="Extracellular" evidence="6">
    <location>
        <begin position="282"/>
        <end position="297"/>
    </location>
</feature>
<feature type="intramembrane region" description="Pore-forming; Name=Segment H5" evidence="1">
    <location>
        <begin position="298"/>
        <end position="318"/>
    </location>
</feature>
<feature type="topological domain" description="Extracellular" evidence="6">
    <location>
        <begin position="319"/>
        <end position="320"/>
    </location>
</feature>
<feature type="transmembrane region" description="Helical; Name=Segment S6" evidence="1">
    <location>
        <begin position="321"/>
        <end position="346"/>
    </location>
</feature>
<feature type="topological domain" description="Cytoplasmic" evidence="6">
    <location>
        <begin position="347"/>
        <end position="673"/>
    </location>
</feature>
<feature type="region of interest" description="Disordered" evidence="5">
    <location>
        <begin position="1"/>
        <end position="28"/>
    </location>
</feature>
<feature type="region of interest" description="Disordered" evidence="5">
    <location>
        <begin position="61"/>
        <end position="80"/>
    </location>
</feature>
<feature type="region of interest" description="Interaction with KCNE3" evidence="1">
    <location>
        <begin position="236"/>
        <end position="244"/>
    </location>
</feature>
<feature type="region of interest" description="Interaction with CALM" evidence="1">
    <location>
        <begin position="368"/>
        <end position="380"/>
    </location>
</feature>
<feature type="region of interest" description="Interaction with CALM; calcium-dependent" evidence="1">
    <location>
        <begin position="514"/>
        <end position="528"/>
    </location>
</feature>
<feature type="region of interest" description="Interaction with KCNE1 C-terminus" evidence="1">
    <location>
        <begin position="534"/>
        <end position="571"/>
    </location>
</feature>
<feature type="region of interest" description="Interaction with AKAP9" evidence="1">
    <location>
        <begin position="587"/>
        <end position="615"/>
    </location>
</feature>
<feature type="region of interest" description="C-terminal assembly domain (tetramerization)" evidence="1">
    <location>
        <begin position="588"/>
        <end position="619"/>
    </location>
</feature>
<feature type="region of interest" description="Disordered" evidence="5">
    <location>
        <begin position="619"/>
        <end position="673"/>
    </location>
</feature>
<feature type="compositionally biased region" description="Low complexity" evidence="5">
    <location>
        <begin position="66"/>
        <end position="75"/>
    </location>
</feature>
<feature type="compositionally biased region" description="Gly residues" evidence="5">
    <location>
        <begin position="622"/>
        <end position="634"/>
    </location>
</feature>
<feature type="binding site" evidence="1">
    <location>
        <position position="242"/>
    </location>
    <ligand>
        <name>a 1,2-diacyl-sn-glycero-3-phospho-(1D-myo-inositol-4,5-bisphosphate)</name>
        <dbReference type="ChEBI" id="CHEBI:58456"/>
    </ligand>
</feature>
<feature type="modified residue" description="Phosphoserine" evidence="1">
    <location>
        <position position="27"/>
    </location>
</feature>
<feature type="modified residue" description="Phosphoserine" evidence="2">
    <location>
        <position position="405"/>
    </location>
</feature>
<feature type="modified residue" description="Phosphoserine" evidence="2">
    <location>
        <position position="407"/>
    </location>
</feature>
<feature type="glycosylation site" description="N-linked (GlcNAc...) asparagine" evidence="4">
    <location>
        <position position="287"/>
    </location>
</feature>
<comment type="function">
    <text evidence="1 2 3">Pore-forming subunit of the voltage-gated potassium (Kv) channel involved in the regulation of cardiomyocyte excitability and important in normal development and functions of myocardium, inner ear, stomach and colon (By similarity). Associates with KCNE beta subunits that modulates current kinetics (By similarity). Induces a voltage-dependent by rapidly activating and slowly deactivating potassium-selective outward current (By similarity). Also promotes a delayed voltage activated potassium current showing outward rectification characteristic (By similarity). During beta-adrenergic receptor stimulation participates in cardiac repolarization by associating with KCNE1 to form the I(Ks) cardiac potassium current that increases the amplitude and slows down the activation kinetics of outward potassium current I(Ks) (By similarity). Muscarinic agonist oxotremorine-M strongly suppresses KCNQ1/KCNE1 current (By similarity). When associated with KCNE3, forms the potassium channel that is important for cyclic AMP-stimulated intestinal secretion of chloride ions (By similarity). This interaction with KCNE3 is reduced by 17beta-estradiol, resulting in the reduction of currents (By similarity). During conditions of increased substrate load, maintains the driving force for proximal tubular and intestinal sodium ions absorption, gastric acid secretion, and cAMP-induced jejunal chloride ions secretion (By similarity). Allows the provision of potassium ions to the luminal membrane of the secretory canaliculus in the resting state as well as during stimulated acid secretion (By similarity). When associated with KCNE2, forms a heterooligomer complex leading to currents with an apparently instantaneous activation, a rapid deactivation process and a linear current-voltage relationship and decreases the amplitude of the outward current (By similarity). When associated with KCNE4, inhibits voltage-gated potassium channel activity (By similarity). When associated with KCNE5, this complex only conducts current upon strong and continued depolarization (By similarity). Also forms a heterotetramer with KCNQ5 that has a voltage-gated potassium channel activity (By similarity). Binds with phosphatidylinositol 4,5-bisphosphate (By similarity). KCNQ1-KCNE2 channel associates with Na(+)-coupled myo-inositol symporter in the apical membrane of choroid plexus epithelium and regulates the myo-inositol gradient between blood and cerebrospinal fluid with an impact on neuron excitability.</text>
</comment>
<comment type="catalytic activity">
    <reaction evidence="1">
        <text>K(+)(in) = K(+)(out)</text>
        <dbReference type="Rhea" id="RHEA:29463"/>
        <dbReference type="ChEBI" id="CHEBI:29103"/>
    </reaction>
</comment>
<comment type="activity regulation">
    <text evidence="1">PIP2 molecule is essential to activate KCNQ channels by inducing the coupling of the voltage-sensing domain (VSD) and the pore-forming domain (PD). Upon channel activation, PIP2 disrupts the VSD-calmodulin/CALM interactions, causing the release of CALM from the VSD which triggers the opening of the gate. Calcium potentiates KCNQ1 channel current through calcium-bound CALM. Calcium-bound CALM competes with PIP2 to stabilize the channel open state.</text>
</comment>
<comment type="subunit">
    <text evidence="1">Tetramer. Heterotetramer with KCNE1; targets to the membrane raft. Interacts (via C-terminus) with CALM; forms a heterooctameric structure (with 4:4 KCNQ1:CALM stoichiometry) in a calcium-independent manner. Interacts with AKAP9; targets protein kinase A (PKA) catalytic and regulatory subunits and protein phosphatase 1 (PP1) to the KCNQ1-KCNE1 complex, allowing PKA-mediated phosphorylation and increase of delayed rectifier potassium channel activity. Interacts with KCNE2; form a heterooligomer complex that targets to the membrane raft and leading to currents with an apparently instantaneous activation, a rapid deactivation process and a linear current-voltage relationship and decreases the amplitude of the outward current. Interacts with AP2M1; mediates estrogen-induced internalization via clathrin-coated vesicles. Interacts with NEDD4L; promotes internalization and decreases I(Ks) currents. Interacts with USP2; counteracts the NEDD4L-specific down-regulation of I(Ks) and restore plasma membrane localization. Heterotetramer with KCNQ5; has a voltage-gated potassium channel activity. Interacts with KCNE3; four KCNE3 molecules are bound to one KCNQ1 tetramer (4:4 KCNQ1:KCNE3 stoichiometry); alters membrane raft localization; affects KCNQ1 structure and gating properties. Interacts with KCNE4; impairs KCNQ1 localization in lipid rafts and inhibits voltage-gated potassium channel activity. Interacts with KCNE5; impairs KCNQ1 localization in lipid rafts and only conducts current upon strong and continued depolarization. Interacts with SLC5A3; forms coregulatory channel-transporter complexes that modulate Na(+)-coupled myo-inositol influx through the transporter (By similarity).</text>
</comment>
<comment type="subcellular location">
    <subcellularLocation>
        <location evidence="1">Cell membrane</location>
        <topology evidence="1">Multi-pass membrane protein</topology>
    </subcellularLocation>
    <subcellularLocation>
        <location evidence="1">Cytoplasmic vesicle membrane</location>
    </subcellularLocation>
    <subcellularLocation>
        <location evidence="1">Early endosome</location>
    </subcellularLocation>
    <subcellularLocation>
        <location evidence="1">Membrane raft</location>
    </subcellularLocation>
    <subcellularLocation>
        <location evidence="1">Endoplasmic reticulum</location>
    </subcellularLocation>
    <subcellularLocation>
        <location evidence="1">Basolateral cell membrane</location>
    </subcellularLocation>
    <subcellularLocation>
        <location evidence="2">Apical cell membrane</location>
        <topology evidence="4">Multi-pass membrane protein</topology>
    </subcellularLocation>
    <text evidence="1 2">Colocalized with KCNE3 at the plasma membrane. Upon 17beta-oestradiol treatment, colocalizes with RAB5A at early endosome. Heterotetramer with KCNQ5 is highly retained at the endoplasmic reticulum and is localized outside of lipid raft microdomains. During the early stages of epithelial cell polarization induced by the calcium switch it is removed from the plasma membrane to the endoplasmic reticulum, where it is retained, and redistributed to the basolateral cell surface in a PI3K-dependent manner at a later stage. Colocalizes with SLC5A3 at the apical membrane of choroid plexus epithelium (By similarity).</text>
</comment>
<comment type="domain">
    <text evidence="1">Each channel subunit contains six transmembrane segments (S1-S6) with S1-S4 forming one voltage sensing domain (VSD) and S5-S6 contributing to form one quarter of an interlocking pore-forming domain (PD).</text>
</comment>
<comment type="domain">
    <text evidence="1">The segment S6 is involved in the inhibition of voltage-gated potassium channel activity by KCNE4.</text>
</comment>
<comment type="domain">
    <text evidence="1">The CALM binding domains correspond to the first two membrane-proximal helical regions that interact with a single calmodulin/CALM molecule forming a clamp-like structure. Binding of CALM C-terminus to the first helix is calcium-independent and is essential for assembly of the structure. Binding of CALM N-terminus to the second helix is calcium-dependent and regulates electrophysiological activity of the channel.</text>
</comment>
<comment type="domain">
    <text evidence="1">The C-terminal assembly domain carries the major determinants of tetramerization and subunit assembly specificity. Its coiled-coil region is four-stranded.</text>
</comment>
<comment type="PTM">
    <text evidence="1">Ubiquitinated by NEDD4L; promotes internalization. The ubiquitinylated form is internalized through a clathrin-mediated endocytosis by interacting with AP2M1 and is recycled back to the cell membrane via RAB4A and RAB11A.</text>
</comment>
<comment type="PTM">
    <text evidence="1">Deubiquitinated by USP2; counteracts the NEDD4L-specific down-regulation of I(Ks) and restores the membrane localization.</text>
</comment>
<comment type="similarity">
    <text evidence="6">Belongs to the potassium channel family. KQT (TC 1.A.1.15) subfamily. Kv7.1/KCNQ1 sub-subfamily.</text>
</comment>
<gene>
    <name evidence="1" type="primary">KCNQ1</name>
    <name evidence="1" type="synonym">KVLQT1</name>
</gene>
<evidence type="ECO:0000250" key="1">
    <source>
        <dbReference type="UniProtKB" id="P51787"/>
    </source>
</evidence>
<evidence type="ECO:0000250" key="2">
    <source>
        <dbReference type="UniProtKB" id="P97414"/>
    </source>
</evidence>
<evidence type="ECO:0000250" key="3">
    <source>
        <dbReference type="UniProtKB" id="Q9Z0N7"/>
    </source>
</evidence>
<evidence type="ECO:0000255" key="4"/>
<evidence type="ECO:0000256" key="5">
    <source>
        <dbReference type="SAM" id="MobiDB-lite"/>
    </source>
</evidence>
<evidence type="ECO:0000305" key="6"/>
<evidence type="ECO:0000312" key="7">
    <source>
        <dbReference type="EMBL" id="HDA68746.1"/>
    </source>
</evidence>
<evidence type="ECO:0000312" key="8">
    <source>
        <dbReference type="Proteomes" id="UP000008227"/>
    </source>
</evidence>
<name>KCNQ1_PIG</name>
<accession>Q9TTJ7</accession>
<accession>A0A287A438</accession>
<sequence>MAAATSPPRAERKRWGGGRLPGARRGSAGLAKKCPFSLELAEGGPTGGALYAPIGPPGVPGPSSPAAPAASPAAADLGPRPRVSLDPRVSIYSARRPLLARTHIQGRVYNFLERPTGWKCFVYHFAVFLIVLVCLIFSVLSTIEQYVALATGTLFWMEIVLVVFFGTEYAVRLWSAGCRSKYVGIWGRLRFARKPISIIDLIVVVASMVVLCVGSKGQVFATSAIRGIRFLQILRMLHVDRQGGTWRLLGSVVFIHRQELITTLYIGFLGLIFSSYFVYLAEKDAVNESGQVEFGSYADALWWGVVTVTTIGYGDKVPQTWVGKTIASCFSVFAISFFALPAGILGSGFALKVQQKQRQKHFNRQIPAAASLIQTAWRCYAAENPDSSTWKIYVRKPSRSQALLSPSPKPKKSVMVKKKKFKLDKDNGLSPGEKMLAVPQITCDLASEEQRPDHFSVDGCDNSVKKSPTLLEVSTAQFTRTNSFAEDLDLEGETLLTPITHVSQLREHHRATIKVIRRMQYFVAKKKFQQARKPYDVRDVIEQYSQGHLNLMVRIKELQRRLDQSIGRPALFISSSEKVKDRGSNTIGARLNRVEDKVTQLDQRLELITDMLQQLLSLHRGGTPGSRAPGGGGAQVAQPCSGGSINPELFLPSNALPTYEQLTVPGRGPEEGS</sequence>
<dbReference type="EMBL" id="AEMK02000006">
    <property type="status" value="NOT_ANNOTATED_CDS"/>
    <property type="molecule type" value="Genomic_DNA"/>
</dbReference>
<dbReference type="EMBL" id="AB033207">
    <property type="protein sequence ID" value="BAA88580.1"/>
    <property type="molecule type" value="mRNA"/>
</dbReference>
<dbReference type="EMBL" id="DQIR01113270">
    <property type="protein sequence ID" value="HDA68746.1"/>
    <property type="molecule type" value="Transcribed_RNA"/>
</dbReference>
<dbReference type="EMBL" id="DQIR01186501">
    <property type="protein sequence ID" value="HDB41978.1"/>
    <property type="molecule type" value="Transcribed_RNA"/>
</dbReference>
<dbReference type="RefSeq" id="XP_020938278.1">
    <property type="nucleotide sequence ID" value="XM_021082619.1"/>
</dbReference>
<dbReference type="SMR" id="Q9TTJ7"/>
<dbReference type="FunCoup" id="Q9TTJ7">
    <property type="interactions" value="148"/>
</dbReference>
<dbReference type="GlyCosmos" id="Q9TTJ7">
    <property type="glycosylation" value="1 site, No reported glycans"/>
</dbReference>
<dbReference type="GlyGen" id="Q9TTJ7">
    <property type="glycosylation" value="2 sites"/>
</dbReference>
<dbReference type="Ensembl" id="ENSSSCT00000053475.2">
    <property type="protein sequence ID" value="ENSSSCP00000038521.1"/>
    <property type="gene ID" value="ENSSSCG00000039556.3"/>
</dbReference>
<dbReference type="Ensembl" id="ENSSSCT00025034227.1">
    <property type="protein sequence ID" value="ENSSSCP00025014257.1"/>
    <property type="gene ID" value="ENSSSCG00025025273.1"/>
</dbReference>
<dbReference type="Ensembl" id="ENSSSCT00030103028.1">
    <property type="protein sequence ID" value="ENSSSCP00030047532.1"/>
    <property type="gene ID" value="ENSSSCG00030073514.1"/>
</dbReference>
<dbReference type="Ensembl" id="ENSSSCT00045008924.1">
    <property type="protein sequence ID" value="ENSSSCP00045006061.1"/>
    <property type="gene ID" value="ENSSSCG00045005372.1"/>
</dbReference>
<dbReference type="Ensembl" id="ENSSSCT00050012936.1">
    <property type="protein sequence ID" value="ENSSSCP00050005361.1"/>
    <property type="gene ID" value="ENSSSCG00050009557.1"/>
</dbReference>
<dbReference type="Ensembl" id="ENSSSCT00055005087.1">
    <property type="protein sequence ID" value="ENSSSCP00055003934.1"/>
    <property type="gene ID" value="ENSSSCG00055002634.1"/>
</dbReference>
<dbReference type="Ensembl" id="ENSSSCT00060050141.1">
    <property type="protein sequence ID" value="ENSSSCP00060021453.1"/>
    <property type="gene ID" value="ENSSSCG00060036994.1"/>
</dbReference>
<dbReference type="Ensembl" id="ENSSSCT00065089963.1">
    <property type="protein sequence ID" value="ENSSSCP00065039344.1"/>
    <property type="gene ID" value="ENSSSCG00065065522.1"/>
</dbReference>
<dbReference type="Ensembl" id="ENSSSCT00070029507.1">
    <property type="protein sequence ID" value="ENSSSCP00070024595.1"/>
    <property type="gene ID" value="ENSSSCG00070015013.1"/>
</dbReference>
<dbReference type="Ensembl" id="ENSSSCT00105052865">
    <property type="protein sequence ID" value="ENSSSCP00105037209"/>
    <property type="gene ID" value="ENSSSCG00105027749"/>
</dbReference>
<dbReference type="Ensembl" id="ENSSSCT00110057013">
    <property type="protein sequence ID" value="ENSSSCP00110039617"/>
    <property type="gene ID" value="ENSSSCG00110029844"/>
</dbReference>
<dbReference type="Ensembl" id="ENSSSCT00115011059">
    <property type="protein sequence ID" value="ENSSSCP00115010421"/>
    <property type="gene ID" value="ENSSSCG00115006319"/>
</dbReference>
<dbReference type="Ensembl" id="ENSSSCT00130075473">
    <property type="protein sequence ID" value="ENSSSCP00130054294"/>
    <property type="gene ID" value="ENSSSCG00130038722"/>
</dbReference>
<dbReference type="GeneID" id="397326"/>
<dbReference type="VGNC" id="VGNC:99782">
    <property type="gene designation" value="KCNQ1"/>
</dbReference>
<dbReference type="GeneTree" id="ENSGT00940000161001"/>
<dbReference type="InParanoid" id="Q9TTJ7"/>
<dbReference type="OrthoDB" id="8879391at2759"/>
<dbReference type="Proteomes" id="UP000008227">
    <property type="component" value="Chromosome 2"/>
</dbReference>
<dbReference type="Proteomes" id="UP000314985">
    <property type="component" value="Unassembled WGS sequence"/>
</dbReference>
<dbReference type="Proteomes" id="UP000694570">
    <property type="component" value="Unplaced"/>
</dbReference>
<dbReference type="Proteomes" id="UP000694571">
    <property type="component" value="Unplaced"/>
</dbReference>
<dbReference type="Proteomes" id="UP000694720">
    <property type="component" value="Unplaced"/>
</dbReference>
<dbReference type="Proteomes" id="UP000694722">
    <property type="component" value="Unplaced"/>
</dbReference>
<dbReference type="Proteomes" id="UP000694723">
    <property type="component" value="Unplaced"/>
</dbReference>
<dbReference type="Proteomes" id="UP000694724">
    <property type="component" value="Unplaced"/>
</dbReference>
<dbReference type="Proteomes" id="UP000694725">
    <property type="component" value="Unplaced"/>
</dbReference>
<dbReference type="Proteomes" id="UP000694726">
    <property type="component" value="Unplaced"/>
</dbReference>
<dbReference type="Proteomes" id="UP000694727">
    <property type="component" value="Unplaced"/>
</dbReference>
<dbReference type="Proteomes" id="UP000694728">
    <property type="component" value="Unplaced"/>
</dbReference>
<dbReference type="Bgee" id="ENSSSCG00000039556">
    <property type="expression patterns" value="Expressed in granulosa cell and 29 other cell types or tissues"/>
</dbReference>
<dbReference type="ExpressionAtlas" id="Q9TTJ7">
    <property type="expression patterns" value="baseline and differential"/>
</dbReference>
<dbReference type="GO" id="GO:0016324">
    <property type="term" value="C:apical plasma membrane"/>
    <property type="evidence" value="ECO:0007669"/>
    <property type="project" value="UniProtKB-SubCell"/>
</dbReference>
<dbReference type="GO" id="GO:1990794">
    <property type="term" value="C:basolateral part of cell"/>
    <property type="evidence" value="ECO:0007669"/>
    <property type="project" value="Ensembl"/>
</dbReference>
<dbReference type="GO" id="GO:0016323">
    <property type="term" value="C:basolateral plasma membrane"/>
    <property type="evidence" value="ECO:0000250"/>
    <property type="project" value="UniProtKB"/>
</dbReference>
<dbReference type="GO" id="GO:0097546">
    <property type="term" value="C:ciliary base"/>
    <property type="evidence" value="ECO:0007669"/>
    <property type="project" value="Ensembl"/>
</dbReference>
<dbReference type="GO" id="GO:0005737">
    <property type="term" value="C:cytoplasm"/>
    <property type="evidence" value="ECO:0000250"/>
    <property type="project" value="UniProtKB"/>
</dbReference>
<dbReference type="GO" id="GO:0030659">
    <property type="term" value="C:cytoplasmic vesicle membrane"/>
    <property type="evidence" value="ECO:0007669"/>
    <property type="project" value="UniProtKB-SubCell"/>
</dbReference>
<dbReference type="GO" id="GO:0005829">
    <property type="term" value="C:cytosol"/>
    <property type="evidence" value="ECO:0007669"/>
    <property type="project" value="Ensembl"/>
</dbReference>
<dbReference type="GO" id="GO:0005769">
    <property type="term" value="C:early endosome"/>
    <property type="evidence" value="ECO:0007669"/>
    <property type="project" value="UniProtKB-SubCell"/>
</dbReference>
<dbReference type="GO" id="GO:0005783">
    <property type="term" value="C:endoplasmic reticulum"/>
    <property type="evidence" value="ECO:0007669"/>
    <property type="project" value="UniProtKB-SubCell"/>
</dbReference>
<dbReference type="GO" id="GO:0005770">
    <property type="term" value="C:late endosome"/>
    <property type="evidence" value="ECO:0007669"/>
    <property type="project" value="Ensembl"/>
</dbReference>
<dbReference type="GO" id="GO:0098576">
    <property type="term" value="C:lumenal side of membrane"/>
    <property type="evidence" value="ECO:0007669"/>
    <property type="project" value="Ensembl"/>
</dbReference>
<dbReference type="GO" id="GO:0005764">
    <property type="term" value="C:lysosome"/>
    <property type="evidence" value="ECO:0007669"/>
    <property type="project" value="Ensembl"/>
</dbReference>
<dbReference type="GO" id="GO:0045121">
    <property type="term" value="C:membrane raft"/>
    <property type="evidence" value="ECO:0000250"/>
    <property type="project" value="UniProtKB"/>
</dbReference>
<dbReference type="GO" id="GO:0034702">
    <property type="term" value="C:monoatomic ion channel complex"/>
    <property type="evidence" value="ECO:0000250"/>
    <property type="project" value="UniProtKB"/>
</dbReference>
<dbReference type="GO" id="GO:0043005">
    <property type="term" value="C:neuron projection"/>
    <property type="evidence" value="ECO:0007669"/>
    <property type="project" value="Ensembl"/>
</dbReference>
<dbReference type="GO" id="GO:0043025">
    <property type="term" value="C:neuronal cell body"/>
    <property type="evidence" value="ECO:0007669"/>
    <property type="project" value="Ensembl"/>
</dbReference>
<dbReference type="GO" id="GO:0005886">
    <property type="term" value="C:plasma membrane"/>
    <property type="evidence" value="ECO:0000250"/>
    <property type="project" value="UniProtKB"/>
</dbReference>
<dbReference type="GO" id="GO:0030133">
    <property type="term" value="C:transport vesicle"/>
    <property type="evidence" value="ECO:0007669"/>
    <property type="project" value="Ensembl"/>
</dbReference>
<dbReference type="GO" id="GO:0008076">
    <property type="term" value="C:voltage-gated potassium channel complex"/>
    <property type="evidence" value="ECO:0000318"/>
    <property type="project" value="GO_Central"/>
</dbReference>
<dbReference type="GO" id="GO:0005516">
    <property type="term" value="F:calmodulin binding"/>
    <property type="evidence" value="ECO:0007669"/>
    <property type="project" value="UniProtKB-KW"/>
</dbReference>
<dbReference type="GO" id="GO:0005251">
    <property type="term" value="F:delayed rectifier potassium channel activity"/>
    <property type="evidence" value="ECO:0000250"/>
    <property type="project" value="UniProtKB"/>
</dbReference>
<dbReference type="GO" id="GO:0015271">
    <property type="term" value="F:outward rectifier potassium channel activity"/>
    <property type="evidence" value="ECO:0000250"/>
    <property type="project" value="UniProtKB"/>
</dbReference>
<dbReference type="GO" id="GO:0005546">
    <property type="term" value="F:phosphatidylinositol-4,5-bisphosphate binding"/>
    <property type="evidence" value="ECO:0000250"/>
    <property type="project" value="UniProtKB"/>
</dbReference>
<dbReference type="GO" id="GO:0034236">
    <property type="term" value="F:protein kinase A catalytic subunit binding"/>
    <property type="evidence" value="ECO:0007669"/>
    <property type="project" value="Ensembl"/>
</dbReference>
<dbReference type="GO" id="GO:0034237">
    <property type="term" value="F:protein kinase A regulatory subunit binding"/>
    <property type="evidence" value="ECO:0007669"/>
    <property type="project" value="Ensembl"/>
</dbReference>
<dbReference type="GO" id="GO:0008157">
    <property type="term" value="F:protein phosphatase 1 binding"/>
    <property type="evidence" value="ECO:0007669"/>
    <property type="project" value="Ensembl"/>
</dbReference>
<dbReference type="GO" id="GO:0097110">
    <property type="term" value="F:scaffold protein binding"/>
    <property type="evidence" value="ECO:0007669"/>
    <property type="project" value="Ensembl"/>
</dbReference>
<dbReference type="GO" id="GO:0044325">
    <property type="term" value="F:transmembrane transporter binding"/>
    <property type="evidence" value="ECO:0007669"/>
    <property type="project" value="Ensembl"/>
</dbReference>
<dbReference type="GO" id="GO:0031625">
    <property type="term" value="F:ubiquitin protein ligase binding"/>
    <property type="evidence" value="ECO:0007669"/>
    <property type="project" value="Ensembl"/>
</dbReference>
<dbReference type="GO" id="GO:0005249">
    <property type="term" value="F:voltage-gated potassium channel activity"/>
    <property type="evidence" value="ECO:0000250"/>
    <property type="project" value="UniProtKB"/>
</dbReference>
<dbReference type="GO" id="GO:0086089">
    <property type="term" value="F:voltage-gated potassium channel activity involved in atrial cardiac muscle cell action potential repolarization"/>
    <property type="evidence" value="ECO:0007669"/>
    <property type="project" value="Ensembl"/>
</dbReference>
<dbReference type="GO" id="GO:1902282">
    <property type="term" value="F:voltage-gated potassium channel activity involved in ventricular cardiac muscle cell action potential repolarization"/>
    <property type="evidence" value="ECO:0007669"/>
    <property type="project" value="Ensembl"/>
</dbReference>
<dbReference type="GO" id="GO:0071875">
    <property type="term" value="P:adrenergic receptor signaling pathway"/>
    <property type="evidence" value="ECO:0007669"/>
    <property type="project" value="Ensembl"/>
</dbReference>
<dbReference type="GO" id="GO:0060117">
    <property type="term" value="P:auditory receptor cell development"/>
    <property type="evidence" value="ECO:0007669"/>
    <property type="project" value="Ensembl"/>
</dbReference>
<dbReference type="GO" id="GO:0071320">
    <property type="term" value="P:cellular response to cAMP"/>
    <property type="evidence" value="ECO:0007669"/>
    <property type="project" value="Ensembl"/>
</dbReference>
<dbReference type="GO" id="GO:0071872">
    <property type="term" value="P:cellular response to epinephrine stimulus"/>
    <property type="evidence" value="ECO:0007669"/>
    <property type="project" value="Ensembl"/>
</dbReference>
<dbReference type="GO" id="GO:0071466">
    <property type="term" value="P:cellular response to xenobiotic stimulus"/>
    <property type="evidence" value="ECO:0007669"/>
    <property type="project" value="Ensembl"/>
</dbReference>
<dbReference type="GO" id="GO:0090102">
    <property type="term" value="P:cochlea development"/>
    <property type="evidence" value="ECO:0007669"/>
    <property type="project" value="Ensembl"/>
</dbReference>
<dbReference type="GO" id="GO:0035934">
    <property type="term" value="P:corticosterone secretion"/>
    <property type="evidence" value="ECO:0007669"/>
    <property type="project" value="Ensembl"/>
</dbReference>
<dbReference type="GO" id="GO:0050910">
    <property type="term" value="P:detection of mechanical stimulus involved in sensory perception of sound"/>
    <property type="evidence" value="ECO:0007669"/>
    <property type="project" value="Ensembl"/>
</dbReference>
<dbReference type="GO" id="GO:0030218">
    <property type="term" value="P:erythrocyte differentiation"/>
    <property type="evidence" value="ECO:0007669"/>
    <property type="project" value="Ensembl"/>
</dbReference>
<dbReference type="GO" id="GO:0001698">
    <property type="term" value="P:gastrin-induced gastric acid secretion"/>
    <property type="evidence" value="ECO:0007669"/>
    <property type="project" value="Ensembl"/>
</dbReference>
<dbReference type="GO" id="GO:0006006">
    <property type="term" value="P:glucose metabolic process"/>
    <property type="evidence" value="ECO:0007669"/>
    <property type="project" value="Ensembl"/>
</dbReference>
<dbReference type="GO" id="GO:0007507">
    <property type="term" value="P:heart development"/>
    <property type="evidence" value="ECO:0007669"/>
    <property type="project" value="Ensembl"/>
</dbReference>
<dbReference type="GO" id="GO:0048839">
    <property type="term" value="P:inner ear development"/>
    <property type="evidence" value="ECO:0000250"/>
    <property type="project" value="UniProtKB"/>
</dbReference>
<dbReference type="GO" id="GO:0042472">
    <property type="term" value="P:inner ear morphogenesis"/>
    <property type="evidence" value="ECO:0007669"/>
    <property type="project" value="Ensembl"/>
</dbReference>
<dbReference type="GO" id="GO:0050892">
    <property type="term" value="P:intestinal absorption"/>
    <property type="evidence" value="ECO:0000250"/>
    <property type="project" value="UniProtKB"/>
</dbReference>
<dbReference type="GO" id="GO:0030644">
    <property type="term" value="P:intracellular chloride ion homeostasis"/>
    <property type="evidence" value="ECO:0007669"/>
    <property type="project" value="Ensembl"/>
</dbReference>
<dbReference type="GO" id="GO:0015705">
    <property type="term" value="P:iodide transport"/>
    <property type="evidence" value="ECO:0007669"/>
    <property type="project" value="Ensembl"/>
</dbReference>
<dbReference type="GO" id="GO:0086009">
    <property type="term" value="P:membrane repolarization"/>
    <property type="evidence" value="ECO:0000250"/>
    <property type="project" value="UniProtKB"/>
</dbReference>
<dbReference type="GO" id="GO:0098914">
    <property type="term" value="P:membrane repolarization during atrial cardiac muscle cell action potential"/>
    <property type="evidence" value="ECO:0007669"/>
    <property type="project" value="Ensembl"/>
</dbReference>
<dbReference type="GO" id="GO:1905515">
    <property type="term" value="P:non-motile cilium assembly"/>
    <property type="evidence" value="ECO:0007669"/>
    <property type="project" value="Ensembl"/>
</dbReference>
<dbReference type="GO" id="GO:0060452">
    <property type="term" value="P:positive regulation of cardiac muscle contraction"/>
    <property type="evidence" value="ECO:0007669"/>
    <property type="project" value="Ensembl"/>
</dbReference>
<dbReference type="GO" id="GO:0010460">
    <property type="term" value="P:positive regulation of heart rate"/>
    <property type="evidence" value="ECO:0007669"/>
    <property type="project" value="Ensembl"/>
</dbReference>
<dbReference type="GO" id="GO:1901381">
    <property type="term" value="P:positive regulation of potassium ion transmembrane transport"/>
    <property type="evidence" value="ECO:0007669"/>
    <property type="project" value="Ensembl"/>
</dbReference>
<dbReference type="GO" id="GO:0097623">
    <property type="term" value="P:potassium ion export across plasma membrane"/>
    <property type="evidence" value="ECO:0007669"/>
    <property type="project" value="Ensembl"/>
</dbReference>
<dbReference type="GO" id="GO:0055075">
    <property type="term" value="P:potassium ion homeostasis"/>
    <property type="evidence" value="ECO:0007669"/>
    <property type="project" value="Ensembl"/>
</dbReference>
<dbReference type="GO" id="GO:1990573">
    <property type="term" value="P:potassium ion import across plasma membrane"/>
    <property type="evidence" value="ECO:0007669"/>
    <property type="project" value="Ensembl"/>
</dbReference>
<dbReference type="GO" id="GO:0071805">
    <property type="term" value="P:potassium ion transmembrane transport"/>
    <property type="evidence" value="ECO:0000318"/>
    <property type="project" value="GO_Central"/>
</dbReference>
<dbReference type="GO" id="GO:0060372">
    <property type="term" value="P:regulation of atrial cardiac muscle cell membrane repolarization"/>
    <property type="evidence" value="ECO:0007669"/>
    <property type="project" value="Ensembl"/>
</dbReference>
<dbReference type="GO" id="GO:0008217">
    <property type="term" value="P:regulation of blood pressure"/>
    <property type="evidence" value="ECO:0007669"/>
    <property type="project" value="Ensembl"/>
</dbReference>
<dbReference type="GO" id="GO:0060453">
    <property type="term" value="P:regulation of gastric acid secretion"/>
    <property type="evidence" value="ECO:0000250"/>
    <property type="project" value="UniProtKB"/>
</dbReference>
<dbReference type="GO" id="GO:0086091">
    <property type="term" value="P:regulation of heart rate by cardiac conduction"/>
    <property type="evidence" value="ECO:0007669"/>
    <property type="project" value="Ensembl"/>
</dbReference>
<dbReference type="GO" id="GO:0060307">
    <property type="term" value="P:regulation of ventricular cardiac muscle cell membrane repolarization"/>
    <property type="evidence" value="ECO:0007669"/>
    <property type="project" value="Ensembl"/>
</dbReference>
<dbReference type="GO" id="GO:0070293">
    <property type="term" value="P:renal absorption"/>
    <property type="evidence" value="ECO:0000250"/>
    <property type="project" value="UniProtKB"/>
</dbReference>
<dbReference type="GO" id="GO:0070294">
    <property type="term" value="P:renal sodium ion absorption"/>
    <property type="evidence" value="ECO:0007669"/>
    <property type="project" value="Ensembl"/>
</dbReference>
<dbReference type="GO" id="GO:0032868">
    <property type="term" value="P:response to insulin"/>
    <property type="evidence" value="ECO:0007669"/>
    <property type="project" value="Ensembl"/>
</dbReference>
<dbReference type="GO" id="GO:0007622">
    <property type="term" value="P:rhythmic behavior"/>
    <property type="evidence" value="ECO:0007669"/>
    <property type="project" value="Ensembl"/>
</dbReference>
<dbReference type="GO" id="GO:0035176">
    <property type="term" value="P:social behavior"/>
    <property type="evidence" value="ECO:0007669"/>
    <property type="project" value="Ensembl"/>
</dbReference>
<dbReference type="GO" id="GO:0062094">
    <property type="term" value="P:stomach development"/>
    <property type="evidence" value="ECO:0007669"/>
    <property type="project" value="Ensembl"/>
</dbReference>
<dbReference type="FunFam" id="1.10.287.70:FF:000113">
    <property type="entry name" value="Potassium voltage-gated channel subfamily KQT member 1"/>
    <property type="match status" value="1"/>
</dbReference>
<dbReference type="FunFam" id="1.20.120.350:FF:000017">
    <property type="entry name" value="potassium voltage-gated channel subfamily KQT member 1"/>
    <property type="match status" value="1"/>
</dbReference>
<dbReference type="Gene3D" id="1.10.287.70">
    <property type="match status" value="1"/>
</dbReference>
<dbReference type="Gene3D" id="6.10.140.1910">
    <property type="match status" value="2"/>
</dbReference>
<dbReference type="Gene3D" id="1.20.120.350">
    <property type="entry name" value="Voltage-gated potassium channels. Chain C"/>
    <property type="match status" value="1"/>
</dbReference>
<dbReference type="InterPro" id="IPR005821">
    <property type="entry name" value="Ion_trans_dom"/>
</dbReference>
<dbReference type="InterPro" id="IPR003937">
    <property type="entry name" value="K_chnl_volt-dep_KCNQ"/>
</dbReference>
<dbReference type="InterPro" id="IPR013821">
    <property type="entry name" value="K_chnl_volt-dep_KCNQ_C"/>
</dbReference>
<dbReference type="InterPro" id="IPR005827">
    <property type="entry name" value="K_chnl_volt-dep_KCQN1"/>
</dbReference>
<dbReference type="InterPro" id="IPR027359">
    <property type="entry name" value="Volt_channel_dom_sf"/>
</dbReference>
<dbReference type="PANTHER" id="PTHR47735:SF14">
    <property type="entry name" value="POTASSIUM VOLTAGE-GATED CHANNEL SUBFAMILY KQT MEMBER 1"/>
    <property type="match status" value="1"/>
</dbReference>
<dbReference type="PANTHER" id="PTHR47735">
    <property type="entry name" value="POTASSIUM VOLTAGE-GATED CHANNEL SUBFAMILY KQT MEMBER 4"/>
    <property type="match status" value="1"/>
</dbReference>
<dbReference type="Pfam" id="PF00520">
    <property type="entry name" value="Ion_trans"/>
    <property type="match status" value="1"/>
</dbReference>
<dbReference type="Pfam" id="PF03520">
    <property type="entry name" value="KCNQ_channel"/>
    <property type="match status" value="1"/>
</dbReference>
<dbReference type="PRINTS" id="PR00169">
    <property type="entry name" value="KCHANNEL"/>
</dbReference>
<dbReference type="PRINTS" id="PR01460">
    <property type="entry name" value="KCNQ1CHANNEL"/>
</dbReference>
<dbReference type="PRINTS" id="PR01459">
    <property type="entry name" value="KCNQCHANNEL"/>
</dbReference>
<dbReference type="SUPFAM" id="SSF81324">
    <property type="entry name" value="Voltage-gated potassium channels"/>
    <property type="match status" value="1"/>
</dbReference>
<reference evidence="8" key="1">
    <citation type="submission" date="2009-11" db="EMBL/GenBank/DDBJ databases">
        <authorList>
            <consortium name="Porcine genome sequencing project"/>
        </authorList>
    </citation>
    <scope>NUCLEOTIDE SEQUENCE [LARGE SCALE GENOMIC DNA]</scope>
    <source>
        <strain evidence="8">Duroc</strain>
    </source>
</reference>
<reference key="2">
    <citation type="submission" date="1999-10" db="EMBL/GenBank/DDBJ databases">
        <title>Effects of MS-551 on delayed rectifier K current in coronary artery smooth muscle cells.</title>
        <authorList>
            <person name="Imaizumi Y."/>
            <person name="Ohya S."/>
        </authorList>
    </citation>
    <scope>NUCLEOTIDE SEQUENCE [MRNA]</scope>
    <source>
        <tissue>Coronary artery</tissue>
    </source>
</reference>
<reference evidence="7" key="3">
    <citation type="journal article" date="2019" name="PeerJ">
        <title>Genes of the pig, Sus scrofa, reconstructed with EvidentialGene.</title>
        <authorList>
            <person name="Gilbert D.G."/>
        </authorList>
    </citation>
    <scope>IDENTIFICATION</scope>
</reference>
<protein>
    <recommendedName>
        <fullName evidence="1">Potassium voltage-gated channel subfamily KQT member 1</fullName>
    </recommendedName>
    <alternativeName>
        <fullName evidence="1">IKs producing slow voltage-gated potassium channel subunit alpha KvLQT1</fullName>
    </alternativeName>
    <alternativeName>
        <fullName evidence="1">KQT-like 1</fullName>
    </alternativeName>
    <alternativeName>
        <fullName evidence="1">Voltage-gated potassium channel subunit Kv7.1</fullName>
    </alternativeName>
</protein>
<organism>
    <name type="scientific">Sus scrofa</name>
    <name type="common">Pig</name>
    <dbReference type="NCBI Taxonomy" id="9823"/>
    <lineage>
        <taxon>Eukaryota</taxon>
        <taxon>Metazoa</taxon>
        <taxon>Chordata</taxon>
        <taxon>Craniata</taxon>
        <taxon>Vertebrata</taxon>
        <taxon>Euteleostomi</taxon>
        <taxon>Mammalia</taxon>
        <taxon>Eutheria</taxon>
        <taxon>Laurasiatheria</taxon>
        <taxon>Artiodactyla</taxon>
        <taxon>Suina</taxon>
        <taxon>Suidae</taxon>
        <taxon>Sus</taxon>
    </lineage>
</organism>